<name>IOLD_BACAC</name>
<organism>
    <name type="scientific">Bacillus anthracis (strain CDC 684 / NRRL 3495)</name>
    <dbReference type="NCBI Taxonomy" id="568206"/>
    <lineage>
        <taxon>Bacteria</taxon>
        <taxon>Bacillati</taxon>
        <taxon>Bacillota</taxon>
        <taxon>Bacilli</taxon>
        <taxon>Bacillales</taxon>
        <taxon>Bacillaceae</taxon>
        <taxon>Bacillus</taxon>
        <taxon>Bacillus cereus group</taxon>
    </lineage>
</organism>
<comment type="function">
    <text evidence="1">Involved in the cleavage of the C1-C2 bond of 3D-(3,5/4)-trihydroxycyclohexane-1,2-dione (THcHDO) to yield 5-deoxy-glucuronate (5DG).</text>
</comment>
<comment type="catalytic activity">
    <reaction evidence="1">
        <text>3D-3,5/4-trihydroxycyclohexane-1,2-dione + H2O = 5-deoxy-D-glucuronate + H(+)</text>
        <dbReference type="Rhea" id="RHEA:25836"/>
        <dbReference type="ChEBI" id="CHEBI:15377"/>
        <dbReference type="ChEBI" id="CHEBI:15378"/>
        <dbReference type="ChEBI" id="CHEBI:28446"/>
        <dbReference type="ChEBI" id="CHEBI:58852"/>
        <dbReference type="EC" id="3.7.1.22"/>
    </reaction>
</comment>
<comment type="cofactor">
    <cofactor evidence="1">
        <name>Mg(2+)</name>
        <dbReference type="ChEBI" id="CHEBI:18420"/>
    </cofactor>
    <text evidence="1">Binds 1 Mg(2+) ion per subunit.</text>
</comment>
<comment type="cofactor">
    <cofactor evidence="1">
        <name>thiamine diphosphate</name>
        <dbReference type="ChEBI" id="CHEBI:58937"/>
    </cofactor>
    <text evidence="1">Binds 1 thiamine pyrophosphate per subunit.</text>
</comment>
<comment type="pathway">
    <text evidence="1">Polyol metabolism; myo-inositol degradation into acetyl-CoA; acetyl-CoA from myo-inositol: step 3/7.</text>
</comment>
<comment type="similarity">
    <text evidence="1">Belongs to the TPP enzyme family.</text>
</comment>
<proteinExistence type="inferred from homology"/>
<evidence type="ECO:0000255" key="1">
    <source>
        <dbReference type="HAMAP-Rule" id="MF_01669"/>
    </source>
</evidence>
<protein>
    <recommendedName>
        <fullName evidence="1">3D-(3,5/4)-trihydroxycyclohexane-1,2-dione hydrolase</fullName>
        <shortName evidence="1">THcHDO hydrolase</shortName>
        <ecNumber evidence="1">3.7.1.22</ecNumber>
    </recommendedName>
</protein>
<feature type="chain" id="PRO_1000187308" description="3D-(3,5/4)-trihydroxycyclohexane-1,2-dione hydrolase">
    <location>
        <begin position="1"/>
        <end position="644"/>
    </location>
</feature>
<feature type="region of interest" description="Thiamine pyrophosphate binding" evidence="1">
    <location>
        <begin position="442"/>
        <end position="522"/>
    </location>
</feature>
<feature type="binding site" evidence="1">
    <location>
        <position position="65"/>
    </location>
    <ligand>
        <name>thiamine diphosphate</name>
        <dbReference type="ChEBI" id="CHEBI:58937"/>
    </ligand>
</feature>
<feature type="binding site" evidence="1">
    <location>
        <position position="493"/>
    </location>
    <ligand>
        <name>Mg(2+)</name>
        <dbReference type="ChEBI" id="CHEBI:18420"/>
    </ligand>
</feature>
<feature type="binding site" evidence="1">
    <location>
        <position position="520"/>
    </location>
    <ligand>
        <name>Mg(2+)</name>
        <dbReference type="ChEBI" id="CHEBI:18420"/>
    </ligand>
</feature>
<dbReference type="EC" id="3.7.1.22" evidence="1"/>
<dbReference type="EMBL" id="CP001215">
    <property type="protein sequence ID" value="ACP13968.1"/>
    <property type="molecule type" value="Genomic_DNA"/>
</dbReference>
<dbReference type="RefSeq" id="WP_001195355.1">
    <property type="nucleotide sequence ID" value="NC_012581.1"/>
</dbReference>
<dbReference type="SMR" id="C3LHY1"/>
<dbReference type="GeneID" id="45022377"/>
<dbReference type="KEGG" id="bah:BAMEG_2087"/>
<dbReference type="HOGENOM" id="CLU_013748_6_0_9"/>
<dbReference type="UniPathway" id="UPA00076">
    <property type="reaction ID" value="UER00145"/>
</dbReference>
<dbReference type="GO" id="GO:0005948">
    <property type="term" value="C:acetolactate synthase complex"/>
    <property type="evidence" value="ECO:0007669"/>
    <property type="project" value="TreeGrafter"/>
</dbReference>
<dbReference type="GO" id="GO:0102481">
    <property type="term" value="F:3D-(3,5/4)-trihydroxycyclohexane-1,2-dione hydrolase activity"/>
    <property type="evidence" value="ECO:0007669"/>
    <property type="project" value="UniProtKB-EC"/>
</dbReference>
<dbReference type="GO" id="GO:0003984">
    <property type="term" value="F:acetolactate synthase activity"/>
    <property type="evidence" value="ECO:0007669"/>
    <property type="project" value="TreeGrafter"/>
</dbReference>
<dbReference type="GO" id="GO:0050660">
    <property type="term" value="F:flavin adenine dinucleotide binding"/>
    <property type="evidence" value="ECO:0007669"/>
    <property type="project" value="TreeGrafter"/>
</dbReference>
<dbReference type="GO" id="GO:0000287">
    <property type="term" value="F:magnesium ion binding"/>
    <property type="evidence" value="ECO:0007669"/>
    <property type="project" value="UniProtKB-UniRule"/>
</dbReference>
<dbReference type="GO" id="GO:0030976">
    <property type="term" value="F:thiamine pyrophosphate binding"/>
    <property type="evidence" value="ECO:0007669"/>
    <property type="project" value="UniProtKB-UniRule"/>
</dbReference>
<dbReference type="GO" id="GO:0019310">
    <property type="term" value="P:inositol catabolic process"/>
    <property type="evidence" value="ECO:0007669"/>
    <property type="project" value="UniProtKB-UniRule"/>
</dbReference>
<dbReference type="GO" id="GO:0009097">
    <property type="term" value="P:isoleucine biosynthetic process"/>
    <property type="evidence" value="ECO:0007669"/>
    <property type="project" value="TreeGrafter"/>
</dbReference>
<dbReference type="GO" id="GO:0009099">
    <property type="term" value="P:L-valine biosynthetic process"/>
    <property type="evidence" value="ECO:0007669"/>
    <property type="project" value="TreeGrafter"/>
</dbReference>
<dbReference type="CDD" id="cd02003">
    <property type="entry name" value="TPP_IolD"/>
    <property type="match status" value="1"/>
</dbReference>
<dbReference type="CDD" id="cd07035">
    <property type="entry name" value="TPP_PYR_POX_like"/>
    <property type="match status" value="1"/>
</dbReference>
<dbReference type="FunFam" id="3.40.50.1220:FF:000040">
    <property type="entry name" value="3D-(3,5/4)-trihydroxycyclohexane-1,2-dione hydrolase"/>
    <property type="match status" value="1"/>
</dbReference>
<dbReference type="FunFam" id="3.40.50.970:FF:000056">
    <property type="entry name" value="3D-(3,5/4)-trihydroxycyclohexane-1,2-dione hydrolase"/>
    <property type="match status" value="1"/>
</dbReference>
<dbReference type="FunFam" id="3.40.50.970:FF:000072">
    <property type="entry name" value="3D-(3,5/4)-trihydroxycyclohexane-1,2-dione hydrolase"/>
    <property type="match status" value="1"/>
</dbReference>
<dbReference type="Gene3D" id="3.40.50.970">
    <property type="match status" value="2"/>
</dbReference>
<dbReference type="Gene3D" id="3.40.50.1220">
    <property type="entry name" value="TPP-binding domain"/>
    <property type="match status" value="1"/>
</dbReference>
<dbReference type="HAMAP" id="MF_01669">
    <property type="entry name" value="IolD"/>
    <property type="match status" value="1"/>
</dbReference>
<dbReference type="InterPro" id="IPR029035">
    <property type="entry name" value="DHS-like_NAD/FAD-binding_dom"/>
</dbReference>
<dbReference type="InterPro" id="IPR030817">
    <property type="entry name" value="Myo_inos_IolD"/>
</dbReference>
<dbReference type="InterPro" id="IPR023757">
    <property type="entry name" value="THcHDO_hydrolase_firmi"/>
</dbReference>
<dbReference type="InterPro" id="IPR029061">
    <property type="entry name" value="THDP-binding"/>
</dbReference>
<dbReference type="InterPro" id="IPR012000">
    <property type="entry name" value="Thiamin_PyroP_enz_cen_dom"/>
</dbReference>
<dbReference type="InterPro" id="IPR012001">
    <property type="entry name" value="Thiamin_PyroP_enz_TPP-bd_dom"/>
</dbReference>
<dbReference type="InterPro" id="IPR000399">
    <property type="entry name" value="TPP-bd_CS"/>
</dbReference>
<dbReference type="InterPro" id="IPR045229">
    <property type="entry name" value="TPP_enz"/>
</dbReference>
<dbReference type="InterPro" id="IPR011766">
    <property type="entry name" value="TPP_enzyme_TPP-bd"/>
</dbReference>
<dbReference type="NCBIfam" id="TIGR04377">
    <property type="entry name" value="myo_inos_iolD"/>
    <property type="match status" value="1"/>
</dbReference>
<dbReference type="PANTHER" id="PTHR18968:SF9">
    <property type="entry name" value="3D-(3,5_4)-TRIHYDROXYCYCLOHEXANE-1,2-DIONE HYDROLASE"/>
    <property type="match status" value="1"/>
</dbReference>
<dbReference type="PANTHER" id="PTHR18968">
    <property type="entry name" value="THIAMINE PYROPHOSPHATE ENZYMES"/>
    <property type="match status" value="1"/>
</dbReference>
<dbReference type="Pfam" id="PF02775">
    <property type="entry name" value="TPP_enzyme_C"/>
    <property type="match status" value="1"/>
</dbReference>
<dbReference type="Pfam" id="PF00205">
    <property type="entry name" value="TPP_enzyme_M"/>
    <property type="match status" value="1"/>
</dbReference>
<dbReference type="Pfam" id="PF02776">
    <property type="entry name" value="TPP_enzyme_N"/>
    <property type="match status" value="1"/>
</dbReference>
<dbReference type="SUPFAM" id="SSF52467">
    <property type="entry name" value="DHS-like NAD/FAD-binding domain"/>
    <property type="match status" value="1"/>
</dbReference>
<dbReference type="SUPFAM" id="SSF52518">
    <property type="entry name" value="Thiamin diphosphate-binding fold (THDP-binding)"/>
    <property type="match status" value="2"/>
</dbReference>
<dbReference type="PROSITE" id="PS00187">
    <property type="entry name" value="TPP_ENZYMES"/>
    <property type="match status" value="1"/>
</dbReference>
<gene>
    <name evidence="1" type="primary">iolD</name>
    <name type="ordered locus">BAMEG_2087</name>
</gene>
<sequence>MQTVRMTTAQALVKFLNQQYVEFDGKQQKFVKGIFTIFGHGNVVGLGQALEEDAGELEVYQGRNEQGMANAAMAFAKQKHRKQIMACTSSVGPGSANMITSAATASANNIPVLLLPGDVFATRQPDPVLQQIEQTHDLSISTNDAFRAVSKYWDRINRPEQLMTAMIQAMRVLTNPADTGAVTICLPQDVQGEAWDFPSYFFQKRVHRIERRLPTKASLADAVEMIKRKKKPVMICGGGVRYAEAAEELKQFAETFHIPFGETQAGKSAIESSHPYNLGGIGVTGNVAANTIAKEADLVIGIGTRFTDFTTASKQLFQNEEVEFLNINISEFHANKLDALKVIADAKEALLALIDELQEIDYQSSYTVEIADAKDAWETELSRLHNIRFTCQDFTPEVEGHFNENLNEYVDALGTQLTQTAVIGQINTLLDKDAIIVGAAGSLPGDLQRMWASRKPNTYHMEYGYSCMGYEVAGALGAKLAEPSKEVYAMVGDGSYQMLHSELVTSLQENKKINVLLFDNSGFGCINNLQMGNGMGSFGTEFRYRNQETRKLDGAIMKIDFAASAAGYGVKTYHVTSLEQLQEALIDAKKQTVSTLIDIKVLPKTMTNGYESWWHVGVAEVSKNQSVQAAYESKVSNLQQARSY</sequence>
<keyword id="KW-0378">Hydrolase</keyword>
<keyword id="KW-0460">Magnesium</keyword>
<keyword id="KW-0479">Metal-binding</keyword>
<keyword id="KW-0520">NAD</keyword>
<keyword id="KW-0786">Thiamine pyrophosphate</keyword>
<reference key="1">
    <citation type="submission" date="2008-10" db="EMBL/GenBank/DDBJ databases">
        <title>Genome sequence of Bacillus anthracis str. CDC 684.</title>
        <authorList>
            <person name="Dodson R.J."/>
            <person name="Munk A.C."/>
            <person name="Brettin T."/>
            <person name="Bruce D."/>
            <person name="Detter C."/>
            <person name="Tapia R."/>
            <person name="Han C."/>
            <person name="Sutton G."/>
            <person name="Sims D."/>
        </authorList>
    </citation>
    <scope>NUCLEOTIDE SEQUENCE [LARGE SCALE GENOMIC DNA]</scope>
    <source>
        <strain>CDC 684 / NRRL 3495</strain>
    </source>
</reference>
<accession>C3LHY1</accession>